<evidence type="ECO:0000250" key="1"/>
<evidence type="ECO:0000305" key="2"/>
<keyword id="KW-0998">Cell outer membrane</keyword>
<keyword id="KW-0446">Lipid-binding</keyword>
<keyword id="KW-0449">Lipoprotein</keyword>
<keyword id="KW-0472">Membrane</keyword>
<keyword id="KW-0564">Palmitate</keyword>
<keyword id="KW-0732">Signal</keyword>
<sequence length="177" mass="19921">MRILPVVAAVTAAFLVVACSSPTPPKGVTVVNNFDAKRYLGTWYEIARFDHRFERGLDKVTATYSLRDDGGINVINKGYNPDREMWQKTEGKAYFTGDPSTAALKVSFFGPFYGGYNVIALDREYRHALVCGPDRDYLWILSRTPTISDEMKQQMLAIATREGFEVNKLIWVKQPGA</sequence>
<organism>
    <name type="scientific">Citrobacter freundii</name>
    <dbReference type="NCBI Taxonomy" id="546"/>
    <lineage>
        <taxon>Bacteria</taxon>
        <taxon>Pseudomonadati</taxon>
        <taxon>Pseudomonadota</taxon>
        <taxon>Gammaproteobacteria</taxon>
        <taxon>Enterobacterales</taxon>
        <taxon>Enterobacteriaceae</taxon>
        <taxon>Citrobacter</taxon>
        <taxon>Citrobacter freundii complex</taxon>
    </lineage>
</organism>
<name>BLC_CITFR</name>
<dbReference type="EMBL" id="U21727">
    <property type="protein sequence ID" value="AAC46456.1"/>
    <property type="molecule type" value="Genomic_DNA"/>
</dbReference>
<dbReference type="PIR" id="I40710">
    <property type="entry name" value="I40710"/>
</dbReference>
<dbReference type="RefSeq" id="WP_003025522.1">
    <property type="nucleotide sequence ID" value="NZ_VKUV01000036.1"/>
</dbReference>
<dbReference type="SMR" id="Q46036"/>
<dbReference type="STRING" id="1333848.CFNIH1_08410"/>
<dbReference type="GO" id="GO:0009279">
    <property type="term" value="C:cell outer membrane"/>
    <property type="evidence" value="ECO:0007669"/>
    <property type="project" value="UniProtKB-SubCell"/>
</dbReference>
<dbReference type="GO" id="GO:0008289">
    <property type="term" value="F:lipid binding"/>
    <property type="evidence" value="ECO:0007669"/>
    <property type="project" value="UniProtKB-KW"/>
</dbReference>
<dbReference type="GO" id="GO:0006950">
    <property type="term" value="P:response to stress"/>
    <property type="evidence" value="ECO:0007669"/>
    <property type="project" value="UniProtKB-ARBA"/>
</dbReference>
<dbReference type="CDD" id="cd19438">
    <property type="entry name" value="lipocalin_Blc-like"/>
    <property type="match status" value="1"/>
</dbReference>
<dbReference type="FunFam" id="2.40.128.20:FF:000002">
    <property type="entry name" value="Outer membrane lipoprotein Blc"/>
    <property type="match status" value="1"/>
</dbReference>
<dbReference type="Gene3D" id="2.40.128.20">
    <property type="match status" value="1"/>
</dbReference>
<dbReference type="InterPro" id="IPR012674">
    <property type="entry name" value="Calycin"/>
</dbReference>
<dbReference type="InterPro" id="IPR022271">
    <property type="entry name" value="Lipocalin_ApoD"/>
</dbReference>
<dbReference type="InterPro" id="IPR002446">
    <property type="entry name" value="Lipocalin_bac"/>
</dbReference>
<dbReference type="InterPro" id="IPR047202">
    <property type="entry name" value="Lipocalin_Blc-like_dom"/>
</dbReference>
<dbReference type="InterPro" id="IPR022272">
    <property type="entry name" value="Lipocalin_CS"/>
</dbReference>
<dbReference type="InterPro" id="IPR000566">
    <property type="entry name" value="Lipocln_cytosolic_FA-bd_dom"/>
</dbReference>
<dbReference type="NCBIfam" id="NF007786">
    <property type="entry name" value="PRK10477.1"/>
    <property type="match status" value="1"/>
</dbReference>
<dbReference type="PANTHER" id="PTHR10612">
    <property type="entry name" value="APOLIPOPROTEIN D"/>
    <property type="match status" value="1"/>
</dbReference>
<dbReference type="PANTHER" id="PTHR10612:SF34">
    <property type="entry name" value="APOLIPOPROTEIN D"/>
    <property type="match status" value="1"/>
</dbReference>
<dbReference type="Pfam" id="PF08212">
    <property type="entry name" value="Lipocalin_2"/>
    <property type="match status" value="1"/>
</dbReference>
<dbReference type="PIRSF" id="PIRSF036893">
    <property type="entry name" value="Lipocalin_ApoD"/>
    <property type="match status" value="1"/>
</dbReference>
<dbReference type="PRINTS" id="PR01171">
    <property type="entry name" value="BCTLIPOCALIN"/>
</dbReference>
<dbReference type="SUPFAM" id="SSF50814">
    <property type="entry name" value="Lipocalins"/>
    <property type="match status" value="1"/>
</dbReference>
<dbReference type="PROSITE" id="PS00213">
    <property type="entry name" value="LIPOCALIN"/>
    <property type="match status" value="1"/>
</dbReference>
<dbReference type="PROSITE" id="PS51257">
    <property type="entry name" value="PROKAR_LIPOPROTEIN"/>
    <property type="match status" value="1"/>
</dbReference>
<protein>
    <recommendedName>
        <fullName>Outer membrane lipoprotein Blc</fullName>
    </recommendedName>
</protein>
<feature type="signal peptide" evidence="2">
    <location>
        <begin position="1"/>
        <end position="18"/>
    </location>
</feature>
<feature type="chain" id="PRO_0000017990" description="Outer membrane lipoprotein Blc">
    <location>
        <begin position="19"/>
        <end position="177"/>
    </location>
</feature>
<feature type="lipid moiety-binding region" description="N-palmitoyl cysteine" evidence="2">
    <location>
        <position position="19"/>
    </location>
</feature>
<feature type="lipid moiety-binding region" description="S-diacylglycerol cysteine" evidence="2">
    <location>
        <position position="19"/>
    </location>
</feature>
<accession>Q46036</accession>
<reference key="1">
    <citation type="journal article" date="1995" name="J. Biol. Chem.">
        <title>Stationary phase expression of a novel Escherichia coli outer membrane lipoprotein and its relationship with mammalian apolipoprotein D. Implications for the origin of lipocalins.</title>
        <authorList>
            <person name="Bishop R.E."/>
            <person name="Penfold S.S."/>
            <person name="Frost L.S."/>
            <person name="Hoeltje J.-V."/>
            <person name="Weiner J.H."/>
        </authorList>
    </citation>
    <scope>NUCLEOTIDE SEQUENCE [GENOMIC DNA]</scope>
    <source>
        <strain>OS60</strain>
    </source>
</reference>
<comment type="function">
    <text evidence="1">Involved in the storage or transport of lipids necessary for membrane maintenance under stressful conditions. Displays a binding preference for lysophospholipids (By similarity).</text>
</comment>
<comment type="subunit">
    <text evidence="1">Homodimer.</text>
</comment>
<comment type="subcellular location">
    <subcellularLocation>
        <location>Cell outer membrane</location>
        <topology>Lipid-anchor</topology>
    </subcellularLocation>
</comment>
<comment type="similarity">
    <text evidence="2">Belongs to the calycin superfamily. Lipocalin family.</text>
</comment>
<proteinExistence type="inferred from homology"/>